<feature type="chain" id="PRO_0000427366" description="Uncharacterized protein MT1303">
    <location>
        <begin position="1"/>
        <end position="226"/>
    </location>
</feature>
<accession>P9WM48</accession>
<accession>L0T651</accession>
<accession>P64789</accession>
<accession>Q11054</accession>
<reference key="1">
    <citation type="journal article" date="2002" name="J. Bacteriol.">
        <title>Whole-genome comparison of Mycobacterium tuberculosis clinical and laboratory strains.</title>
        <authorList>
            <person name="Fleischmann R.D."/>
            <person name="Alland D."/>
            <person name="Eisen J.A."/>
            <person name="Carpenter L."/>
            <person name="White O."/>
            <person name="Peterson J.D."/>
            <person name="DeBoy R.T."/>
            <person name="Dodson R.J."/>
            <person name="Gwinn M.L."/>
            <person name="Haft D.H."/>
            <person name="Hickey E.K."/>
            <person name="Kolonay J.F."/>
            <person name="Nelson W.C."/>
            <person name="Umayam L.A."/>
            <person name="Ermolaeva M.D."/>
            <person name="Salzberg S.L."/>
            <person name="Delcher A."/>
            <person name="Utterback T.R."/>
            <person name="Weidman J.F."/>
            <person name="Khouri H.M."/>
            <person name="Gill J."/>
            <person name="Mikula A."/>
            <person name="Bishai W."/>
            <person name="Jacobs W.R. Jr."/>
            <person name="Venter J.C."/>
            <person name="Fraser C.M."/>
        </authorList>
    </citation>
    <scope>NUCLEOTIDE SEQUENCE [LARGE SCALE GENOMIC DNA]</scope>
    <source>
        <strain>CDC 1551 / Oshkosh</strain>
    </source>
</reference>
<organism>
    <name type="scientific">Mycobacterium tuberculosis (strain CDC 1551 / Oshkosh)</name>
    <dbReference type="NCBI Taxonomy" id="83331"/>
    <lineage>
        <taxon>Bacteria</taxon>
        <taxon>Bacillati</taxon>
        <taxon>Actinomycetota</taxon>
        <taxon>Actinomycetes</taxon>
        <taxon>Mycobacteriales</taxon>
        <taxon>Mycobacteriaceae</taxon>
        <taxon>Mycobacterium</taxon>
        <taxon>Mycobacterium tuberculosis complex</taxon>
    </lineage>
</organism>
<protein>
    <recommendedName>
        <fullName>Uncharacterized protein MT1303</fullName>
    </recommendedName>
</protein>
<gene>
    <name type="ordered locus">MT1303</name>
</gene>
<sequence length="226" mass="25230">MVLARPDAVFAPARNRCHVSLPVNAMSLKMKVCNHVIMRHHHMHGRRYGRPGGWQQAQQPDASGAAEWFAGRLPEDWFDGDPTVIVDREEITVIGKLPGLESPEEESAARASGRVSRFRDETRPERMTIADEAQNRYGRKVSWGVEVGGERILFTHIAVPVMTRLKQPERQVLDTLVDAGVARSRSDALAWSVKLVGEHTEEWLAKLRTAMSAVDDLRAQGPDLPA</sequence>
<keyword id="KW-1185">Reference proteome</keyword>
<name>Y1265_MYCTO</name>
<dbReference type="EMBL" id="AE000516">
    <property type="protein sequence ID" value="AAK45562.1"/>
    <property type="molecule type" value="Genomic_DNA"/>
</dbReference>
<dbReference type="PIR" id="A70754">
    <property type="entry name" value="A70754"/>
</dbReference>
<dbReference type="SMR" id="P9WM48"/>
<dbReference type="KEGG" id="mtc:MT1303"/>
<dbReference type="PATRIC" id="fig|83331.31.peg.1408"/>
<dbReference type="HOGENOM" id="CLU_097505_0_0_11"/>
<dbReference type="Proteomes" id="UP000001020">
    <property type="component" value="Chromosome"/>
</dbReference>
<proteinExistence type="predicted"/>